<protein>
    <recommendedName>
        <fullName evidence="7">Protein EPIDERMAL PATTERNING FACTOR 1</fullName>
    </recommendedName>
    <component>
        <recommendedName>
            <fullName evidence="9">MEPF1</fullName>
        </recommendedName>
    </component>
</protein>
<sequence length="104" mass="11444">MKSLLLLAFFLSFFFGSLLARHLPTSSHPSHHHVGMTGALKRQRRRPDTVQVAGSRLPDCSHACGSCSPCRLVMVSFVCASVEEAETCPMAYKCMCNNKSYPVP</sequence>
<proteinExistence type="evidence at protein level"/>
<feature type="signal peptide" evidence="1">
    <location>
        <begin position="1"/>
        <end position="20"/>
    </location>
</feature>
<feature type="chain" id="PRO_0000392497" description="Protein EPIDERMAL PATTERNING FACTOR 1" evidence="1">
    <location>
        <begin position="21"/>
        <end position="104"/>
    </location>
</feature>
<feature type="chain" id="PRO_0000430505" description="MEPF1" evidence="8">
    <location>
        <begin position="53"/>
        <end position="104"/>
    </location>
</feature>
<feature type="glycosylation site" description="N-linked (GlcNAc...) asparagine" evidence="1">
    <location>
        <position position="98"/>
    </location>
</feature>
<feature type="disulfide bond" evidence="8">
    <location>
        <begin position="60"/>
        <end position="94"/>
    </location>
</feature>
<feature type="disulfide bond" evidence="8">
    <location>
        <begin position="64"/>
        <end position="70"/>
    </location>
</feature>
<feature type="disulfide bond" evidence="8">
    <location>
        <begin position="67"/>
        <end position="96"/>
    </location>
</feature>
<feature type="disulfide bond" evidence="4">
    <location>
        <begin position="79"/>
        <end position="88"/>
    </location>
</feature>
<feature type="strand" evidence="13">
    <location>
        <begin position="71"/>
        <end position="76"/>
    </location>
</feature>
<feature type="strand" evidence="13">
    <location>
        <begin position="90"/>
        <end position="96"/>
    </location>
</feature>
<feature type="strand" evidence="13">
    <location>
        <begin position="99"/>
        <end position="101"/>
    </location>
</feature>
<organism>
    <name type="scientific">Arabidopsis thaliana</name>
    <name type="common">Mouse-ear cress</name>
    <dbReference type="NCBI Taxonomy" id="3702"/>
    <lineage>
        <taxon>Eukaryota</taxon>
        <taxon>Viridiplantae</taxon>
        <taxon>Streptophyta</taxon>
        <taxon>Embryophyta</taxon>
        <taxon>Tracheophyta</taxon>
        <taxon>Spermatophyta</taxon>
        <taxon>Magnoliopsida</taxon>
        <taxon>eudicotyledons</taxon>
        <taxon>Gunneridae</taxon>
        <taxon>Pentapetalae</taxon>
        <taxon>rosids</taxon>
        <taxon>malvids</taxon>
        <taxon>Brassicales</taxon>
        <taxon>Brassicaceae</taxon>
        <taxon>Camelineae</taxon>
        <taxon>Arabidopsis</taxon>
    </lineage>
</organism>
<evidence type="ECO:0000255" key="1"/>
<evidence type="ECO:0000269" key="2">
    <source>
    </source>
</evidence>
<evidence type="ECO:0000269" key="3">
    <source>
    </source>
</evidence>
<evidence type="ECO:0000269" key="4">
    <source>
    </source>
</evidence>
<evidence type="ECO:0000269" key="5">
    <source>
    </source>
</evidence>
<evidence type="ECO:0000269" key="6">
    <source>
    </source>
</evidence>
<evidence type="ECO:0000303" key="7">
    <source>
    </source>
</evidence>
<evidence type="ECO:0000303" key="8">
    <source>
    </source>
</evidence>
<evidence type="ECO:0000303" key="9">
    <source>
    </source>
</evidence>
<evidence type="ECO:0000305" key="10"/>
<evidence type="ECO:0000312" key="11">
    <source>
        <dbReference type="Araport" id="AT2G20875"/>
    </source>
</evidence>
<evidence type="ECO:0000312" key="12">
    <source>
        <dbReference type="EMBL" id="AAM15214.1"/>
    </source>
</evidence>
<evidence type="ECO:0007829" key="13">
    <source>
        <dbReference type="PDB" id="5XJO"/>
    </source>
</evidence>
<keyword id="KW-0002">3D-structure</keyword>
<keyword id="KW-0217">Developmental protein</keyword>
<keyword id="KW-1015">Disulfide bond</keyword>
<keyword id="KW-0325">Glycoprotein</keyword>
<keyword id="KW-1185">Reference proteome</keyword>
<keyword id="KW-0964">Secreted</keyword>
<keyword id="KW-0732">Signal</keyword>
<dbReference type="EMBL" id="AC006234">
    <property type="protein sequence ID" value="AAM15214.1"/>
    <property type="molecule type" value="Genomic_DNA"/>
</dbReference>
<dbReference type="EMBL" id="CP002685">
    <property type="protein sequence ID" value="AEC07090.1"/>
    <property type="molecule type" value="Genomic_DNA"/>
</dbReference>
<dbReference type="RefSeq" id="NP_179684.1">
    <property type="nucleotide sequence ID" value="NM_127657.4"/>
</dbReference>
<dbReference type="PDB" id="5XJO">
    <property type="method" value="X-ray"/>
    <property type="resolution" value="2.63 A"/>
    <property type="chains" value="E/F=53-104"/>
</dbReference>
<dbReference type="PDBsum" id="5XJO"/>
<dbReference type="SMR" id="Q8S8I4"/>
<dbReference type="BioGRID" id="1974">
    <property type="interactions" value="2"/>
</dbReference>
<dbReference type="FunCoup" id="Q8S8I4">
    <property type="interactions" value="172"/>
</dbReference>
<dbReference type="STRING" id="3702.Q8S8I4"/>
<dbReference type="GlyCosmos" id="Q8S8I4">
    <property type="glycosylation" value="1 site, No reported glycans"/>
</dbReference>
<dbReference type="GlyGen" id="Q8S8I4">
    <property type="glycosylation" value="1 site"/>
</dbReference>
<dbReference type="PaxDb" id="3702-AT2G20875.1"/>
<dbReference type="EnsemblPlants" id="AT2G20875.1">
    <property type="protein sequence ID" value="AT2G20875.1"/>
    <property type="gene ID" value="AT2G20875"/>
</dbReference>
<dbReference type="GeneID" id="816621"/>
<dbReference type="Gramene" id="AT2G20875.1">
    <property type="protein sequence ID" value="AT2G20875.1"/>
    <property type="gene ID" value="AT2G20875"/>
</dbReference>
<dbReference type="KEGG" id="ath:AT2G20875"/>
<dbReference type="Araport" id="AT2G20875"/>
<dbReference type="TAIR" id="AT2G20875">
    <property type="gene designation" value="EPF1"/>
</dbReference>
<dbReference type="eggNOG" id="ENOG502S3VT">
    <property type="taxonomic scope" value="Eukaryota"/>
</dbReference>
<dbReference type="HOGENOM" id="CLU_135272_1_1_1"/>
<dbReference type="InParanoid" id="Q8S8I4"/>
<dbReference type="OMA" id="HHHVGMM"/>
<dbReference type="OrthoDB" id="771316at2759"/>
<dbReference type="PhylomeDB" id="Q8S8I4"/>
<dbReference type="PRO" id="PR:Q8S8I4"/>
<dbReference type="Proteomes" id="UP000006548">
    <property type="component" value="Chromosome 2"/>
</dbReference>
<dbReference type="ExpressionAtlas" id="Q8S8I4">
    <property type="expression patterns" value="baseline and differential"/>
</dbReference>
<dbReference type="GO" id="GO:0005576">
    <property type="term" value="C:extracellular region"/>
    <property type="evidence" value="ECO:0007669"/>
    <property type="project" value="UniProtKB-SubCell"/>
</dbReference>
<dbReference type="GO" id="GO:2000122">
    <property type="term" value="P:negative regulation of stomatal complex development"/>
    <property type="evidence" value="ECO:0000315"/>
    <property type="project" value="TAIR"/>
</dbReference>
<dbReference type="GO" id="GO:0010374">
    <property type="term" value="P:stomatal complex development"/>
    <property type="evidence" value="ECO:0000316"/>
    <property type="project" value="TAIR"/>
</dbReference>
<dbReference type="GO" id="GO:0010375">
    <property type="term" value="P:stomatal complex patterning"/>
    <property type="evidence" value="ECO:0000315"/>
    <property type="project" value="TAIR"/>
</dbReference>
<dbReference type="InterPro" id="IPR039455">
    <property type="entry name" value="EPFL"/>
</dbReference>
<dbReference type="PANTHER" id="PTHR33109">
    <property type="entry name" value="EPIDERMAL PATTERNING FACTOR-LIKE PROTEIN 4"/>
    <property type="match status" value="1"/>
</dbReference>
<dbReference type="PANTHER" id="PTHR33109:SF41">
    <property type="entry name" value="PROTEIN EPIDERMAL PATTERNING FACTOR 1"/>
    <property type="match status" value="1"/>
</dbReference>
<dbReference type="Pfam" id="PF17181">
    <property type="entry name" value="EPF"/>
    <property type="match status" value="1"/>
</dbReference>
<accession>Q8S8I4</accession>
<reference key="1">
    <citation type="journal article" date="1999" name="Nature">
        <title>Sequence and analysis of chromosome 2 of the plant Arabidopsis thaliana.</title>
        <authorList>
            <person name="Lin X."/>
            <person name="Kaul S."/>
            <person name="Rounsley S.D."/>
            <person name="Shea T.P."/>
            <person name="Benito M.-I."/>
            <person name="Town C.D."/>
            <person name="Fujii C.Y."/>
            <person name="Mason T.M."/>
            <person name="Bowman C.L."/>
            <person name="Barnstead M.E."/>
            <person name="Feldblyum T.V."/>
            <person name="Buell C.R."/>
            <person name="Ketchum K.A."/>
            <person name="Lee J.J."/>
            <person name="Ronning C.M."/>
            <person name="Koo H.L."/>
            <person name="Moffat K.S."/>
            <person name="Cronin L.A."/>
            <person name="Shen M."/>
            <person name="Pai G."/>
            <person name="Van Aken S."/>
            <person name="Umayam L."/>
            <person name="Tallon L.J."/>
            <person name="Gill J.E."/>
            <person name="Adams M.D."/>
            <person name="Carrera A.J."/>
            <person name="Creasy T.H."/>
            <person name="Goodman H.M."/>
            <person name="Somerville C.R."/>
            <person name="Copenhaver G.P."/>
            <person name="Preuss D."/>
            <person name="Nierman W.C."/>
            <person name="White O."/>
            <person name="Eisen J.A."/>
            <person name="Salzberg S.L."/>
            <person name="Fraser C.M."/>
            <person name="Venter J.C."/>
        </authorList>
    </citation>
    <scope>NUCLEOTIDE SEQUENCE [LARGE SCALE GENOMIC DNA]</scope>
    <source>
        <strain>cv. Columbia</strain>
    </source>
</reference>
<reference key="2">
    <citation type="journal article" date="2017" name="Plant J.">
        <title>Araport11: a complete reannotation of the Arabidopsis thaliana reference genome.</title>
        <authorList>
            <person name="Cheng C.Y."/>
            <person name="Krishnakumar V."/>
            <person name="Chan A.P."/>
            <person name="Thibaud-Nissen F."/>
            <person name="Schobel S."/>
            <person name="Town C.D."/>
        </authorList>
    </citation>
    <scope>GENOME REANNOTATION</scope>
    <source>
        <strain>cv. Columbia</strain>
    </source>
</reference>
<reference key="3">
    <citation type="journal article" date="2007" name="Genes Dev.">
        <title>The secretory peptide gene EPF1 enforces the stomatal one-cell-spacing rule.</title>
        <authorList>
            <person name="Hara K."/>
            <person name="Kajita R."/>
            <person name="Torii K.U."/>
            <person name="Bergmann D.C."/>
            <person name="Kakimoto T."/>
        </authorList>
    </citation>
    <scope>FUNCTION</scope>
    <scope>TISSUE SPECIFICITY</scope>
    <scope>DISRUPTION PHENOTYPE</scope>
</reference>
<reference key="4">
    <citation type="journal article" date="2009" name="Plant Cell Physiol.">
        <title>Epidermal cell density is autoregulated via a secretory peptide, EPIDERMAL PATTERNING FACTOR 2 in Arabidopsis leaves.</title>
        <authorList>
            <person name="Hara K."/>
            <person name="Yokoo T."/>
            <person name="Kajita R."/>
            <person name="Onishi T."/>
            <person name="Yahata S."/>
            <person name="Peterson K.M."/>
            <person name="Torii K.U."/>
            <person name="Kakimoto T."/>
        </authorList>
    </citation>
    <scope>FUNCTION</scope>
    <scope>TISSUE SPECIFICITY</scope>
    <scope>DISRUPTION PHENOTYPE</scope>
    <scope>GENE FAMILY</scope>
    <scope>NOMENCLATURE</scope>
</reference>
<reference key="5">
    <citation type="journal article" date="2011" name="Nat. Commun.">
        <title>The NMR structure of stomagen reveals the basis of stomatal density regulation by plant peptide hormones.</title>
        <authorList>
            <person name="Ohki S."/>
            <person name="Takeuchi M."/>
            <person name="Mori M."/>
        </authorList>
    </citation>
    <scope>3D-STRUCTURE MODELING</scope>
    <scope>DISULFIDE BOND</scope>
</reference>
<reference key="6">
    <citation type="journal article" date="2012" name="Genes Dev.">
        <title>Direct interaction of ligand-receptor pairs specifying stomatal patterning.</title>
        <authorList>
            <person name="Lee J.S."/>
            <person name="Kuroha T."/>
            <person name="Hnilova M."/>
            <person name="Khatayevich D."/>
            <person name="Kanaoka M.M."/>
            <person name="McAbee J.M."/>
            <person name="Sarikaya M."/>
            <person name="Tamerler C."/>
            <person name="Torii K.U."/>
        </authorList>
    </citation>
    <scope>FUNCTION</scope>
    <scope>INTERACTION WITH ERECTA AND ERL1</scope>
</reference>
<reference key="7">
    <citation type="journal article" date="2014" name="Nature">
        <title>Carbonic anhydrases, EPF2 and a novel protease mediate CO2 control of stomatal development.</title>
        <authorList>
            <person name="Engineer C.B."/>
            <person name="Ghassemian M."/>
            <person name="Anderson J.C."/>
            <person name="Peck S.C."/>
            <person name="Hu H."/>
            <person name="Schroeder J.I."/>
        </authorList>
    </citation>
    <scope>LACK OF INDUCTION BY CO(2)</scope>
    <scope>LACK OF CLEAVAGE BY CRSP</scope>
    <scope>FUNCTION</scope>
</reference>
<name>EPF1_ARATH</name>
<gene>
    <name evidence="7" type="primary">EPF1</name>
    <name evidence="11" type="ordered locus">At2g20875</name>
    <name evidence="12" type="ORF">F5H14</name>
</gene>
<comment type="function">
    <text evidence="2 3 5 6 8">Controls stomatal patterning. Regulates asymmetric cell division during guard cell differentiation. Mediates stomatal development inhibition. Not cleaved by the protease CRSP (AC Q9LNU1) (PubMed:25043023). MEPF1: mobile signal controlling stomatal development in a non-cell-autonomous manner (PubMed:22241782). Uses ERL1 as major receptor (PubMed:22241782). May act by competing with somatogen (AC Q9SV72) for the same receptor, TMM (AC Q9SSD1) (PubMed:22027592).</text>
</comment>
<comment type="subunit">
    <text evidence="5">Interacts with ERECTA and ERL1, but not with TMM.</text>
</comment>
<comment type="subcellular location">
    <subcellularLocation>
        <location evidence="10">Secreted</location>
    </subcellularLocation>
</comment>
<comment type="tissue specificity">
    <text evidence="2 3">Expressed in shoots, but not in roots. Mostly localized in developing leaves, specifically in meristemoids, guard mother cells (GMCs), and young guard cells.</text>
</comment>
<comment type="induction">
    <text evidence="6">Not induced by high CO(2).</text>
</comment>
<comment type="disruption phenotype">
    <text evidence="2 3">Increased stomatal density and violation of the one-cell-spacing rule (clustering of stomata).</text>
</comment>
<comment type="similarity">
    <text evidence="10">Belongs to the plant cysteine rich small secretory peptide family. Epidermal patterning factor subfamily.</text>
</comment>